<comment type="function">
    <text evidence="2">Blocks human voltage-gated potassium (Kv) channels Kv1.2/KCNA2 and Kv1.3/KCNA3. Does not block human Kv1.1 at 100nM concentration.</text>
</comment>
<comment type="subcellular location">
    <subcellularLocation>
        <location evidence="2">Secreted</location>
    </subcellularLocation>
</comment>
<comment type="tissue specificity">
    <text evidence="5">Expressed by the venom gland.</text>
</comment>
<comment type="mass spectrometry"/>
<comment type="similarity">
    <text evidence="4">Belongs to the short scorpion toxin superfamily. Potassium channel inhibitor family. Alpha-KTx 10 subfamily.</text>
</comment>
<evidence type="ECO:0000250" key="1">
    <source>
        <dbReference type="UniProtKB" id="O46028"/>
    </source>
</evidence>
<evidence type="ECO:0000269" key="2">
    <source>
    </source>
</evidence>
<evidence type="ECO:0000303" key="3">
    <source>
    </source>
</evidence>
<evidence type="ECO:0000305" key="4"/>
<evidence type="ECO:0000305" key="5">
    <source>
    </source>
</evidence>
<reference evidence="4" key="1">
    <citation type="journal article" date="2023" name="Toxins">
        <title>Of Seven New K+ Channel Inhibitor Peptides of Centruroides bonito, alpha-KTx 2.24 Has a Picomolar Affinity for Kv1.2.</title>
        <authorList>
            <person name="Shakeel K."/>
            <person name="Olamendi-Portugal T."/>
            <person name="Naseem M.U."/>
            <person name="Becerril B."/>
            <person name="Zamudio F.Z."/>
            <person name="Delgado-Prudencio G."/>
            <person name="Possani L.D."/>
            <person name="Panyi G."/>
        </authorList>
    </citation>
    <scope>PROTEIN SEQUENCE</scope>
    <scope>FUNCTION</scope>
    <scope>SUBCELLULAR LOCATION</scope>
    <scope>TISSUE SPECIFICITY</scope>
    <scope>MASS SPECTROMETRY</scope>
</reference>
<keyword id="KW-0903">Direct protein sequencing</keyword>
<keyword id="KW-1015">Disulfide bond</keyword>
<keyword id="KW-0872">Ion channel impairing toxin</keyword>
<keyword id="KW-0528">Neurotoxin</keyword>
<keyword id="KW-0632">Potassium channel impairing toxin</keyword>
<keyword id="KW-0964">Secreted</keyword>
<keyword id="KW-0800">Toxin</keyword>
<keyword id="KW-1220">Voltage-gated potassium channel impairing toxin</keyword>
<dbReference type="SMR" id="C0HM75"/>
<dbReference type="GO" id="GO:0005576">
    <property type="term" value="C:extracellular region"/>
    <property type="evidence" value="ECO:0007669"/>
    <property type="project" value="UniProtKB-SubCell"/>
</dbReference>
<dbReference type="GO" id="GO:0008200">
    <property type="term" value="F:ion channel inhibitor activity"/>
    <property type="evidence" value="ECO:0007669"/>
    <property type="project" value="InterPro"/>
</dbReference>
<dbReference type="GO" id="GO:0015459">
    <property type="term" value="F:potassium channel regulator activity"/>
    <property type="evidence" value="ECO:0007669"/>
    <property type="project" value="UniProtKB-KW"/>
</dbReference>
<dbReference type="GO" id="GO:0090729">
    <property type="term" value="F:toxin activity"/>
    <property type="evidence" value="ECO:0007669"/>
    <property type="project" value="UniProtKB-KW"/>
</dbReference>
<dbReference type="Gene3D" id="3.30.30.10">
    <property type="entry name" value="Knottin, scorpion toxin-like"/>
    <property type="match status" value="1"/>
</dbReference>
<dbReference type="InterPro" id="IPR036574">
    <property type="entry name" value="Scorpion_toxin-like_sf"/>
</dbReference>
<dbReference type="InterPro" id="IPR001947">
    <property type="entry name" value="Scorpion_toxinS_K_inh"/>
</dbReference>
<dbReference type="Pfam" id="PF00451">
    <property type="entry name" value="Toxin_2"/>
    <property type="match status" value="1"/>
</dbReference>
<dbReference type="SUPFAM" id="SSF57095">
    <property type="entry name" value="Scorpion toxin-like"/>
    <property type="match status" value="1"/>
</dbReference>
<proteinExistence type="evidence at protein level"/>
<accession>C0HM75</accession>
<sequence>TVCVYRTCDKDCKRRGYRSGKCINNACKCYPY</sequence>
<organism>
    <name type="scientific">Centruroides bonito</name>
    <name type="common">Scorpion</name>
    <dbReference type="NCBI Taxonomy" id="3035065"/>
    <lineage>
        <taxon>Eukaryota</taxon>
        <taxon>Metazoa</taxon>
        <taxon>Ecdysozoa</taxon>
        <taxon>Arthropoda</taxon>
        <taxon>Chelicerata</taxon>
        <taxon>Arachnida</taxon>
        <taxon>Scorpiones</taxon>
        <taxon>Buthida</taxon>
        <taxon>Buthoidea</taxon>
        <taxon>Buthidae</taxon>
        <taxon>Centruroides</taxon>
    </lineage>
</organism>
<feature type="chain" id="PRO_0000459535" description="Potassium channel toxin alpha-KTx 10.6">
    <location>
        <begin position="1"/>
        <end position="32"/>
    </location>
</feature>
<feature type="site" description="Basic residue of the functional dyad" evidence="1">
    <location>
        <position position="21"/>
    </location>
</feature>
<feature type="site" description="Aromatic residue of the functional dyad" evidence="1">
    <location>
        <position position="30"/>
    </location>
</feature>
<feature type="disulfide bond" evidence="1">
    <location>
        <begin position="3"/>
        <end position="22"/>
    </location>
</feature>
<feature type="disulfide bond" evidence="1">
    <location>
        <begin position="8"/>
        <end position="27"/>
    </location>
</feature>
<feature type="disulfide bond" evidence="1">
    <location>
        <begin position="12"/>
        <end position="29"/>
    </location>
</feature>
<feature type="non-terminal residue" evidence="3">
    <location>
        <position position="32"/>
    </location>
</feature>
<name>KA106_CENBO</name>
<protein>
    <recommendedName>
        <fullName evidence="3">Potassium channel toxin alpha-KTx 10.6</fullName>
    </recommendedName>
    <alternativeName>
        <fullName evidence="3">CboK2</fullName>
    </alternativeName>
</protein>